<organism>
    <name type="scientific">Staphylococcus aureus (strain USA300)</name>
    <dbReference type="NCBI Taxonomy" id="367830"/>
    <lineage>
        <taxon>Bacteria</taxon>
        <taxon>Bacillati</taxon>
        <taxon>Bacillota</taxon>
        <taxon>Bacilli</taxon>
        <taxon>Bacillales</taxon>
        <taxon>Staphylococcaceae</taxon>
        <taxon>Staphylococcus</taxon>
    </lineage>
</organism>
<protein>
    <recommendedName>
        <fullName>Na(+)/H(+) antiporter subunit F1</fullName>
    </recommendedName>
    <alternativeName>
        <fullName>Mnh complex subunit F1</fullName>
    </alternativeName>
</protein>
<comment type="function">
    <text evidence="1">Mnh complex is a Na(+)/H(+) antiporter involved in Na(+) excretion.</text>
</comment>
<comment type="subunit">
    <text evidence="1">May form a heterooligomeric complex that consists of seven subunits: mnhA1, mnhB1, mnhC1, mnhD1, mnhE1, mnhF1 and mnhG1.</text>
</comment>
<comment type="subcellular location">
    <subcellularLocation>
        <location evidence="3">Cell membrane</location>
        <topology evidence="3">Multi-pass membrane protein</topology>
    </subcellularLocation>
</comment>
<comment type="similarity">
    <text evidence="3">Belongs to the CPA3 antiporters (TC 2.A.63) subunit F family.</text>
</comment>
<feature type="chain" id="PRO_0000372158" description="Na(+)/H(+) antiporter subunit F1">
    <location>
        <begin position="1"/>
        <end position="97"/>
    </location>
</feature>
<feature type="transmembrane region" description="Helical" evidence="2">
    <location>
        <begin position="3"/>
        <end position="23"/>
    </location>
</feature>
<feature type="transmembrane region" description="Helical" evidence="2">
    <location>
        <begin position="35"/>
        <end position="55"/>
    </location>
</feature>
<feature type="transmembrane region" description="Helical" evidence="2">
    <location>
        <begin position="60"/>
        <end position="80"/>
    </location>
</feature>
<keyword id="KW-0050">Antiport</keyword>
<keyword id="KW-1003">Cell membrane</keyword>
<keyword id="KW-0375">Hydrogen ion transport</keyword>
<keyword id="KW-0406">Ion transport</keyword>
<keyword id="KW-0472">Membrane</keyword>
<keyword id="KW-0915">Sodium</keyword>
<keyword id="KW-0739">Sodium transport</keyword>
<keyword id="KW-0812">Transmembrane</keyword>
<keyword id="KW-1133">Transmembrane helix</keyword>
<keyword id="KW-0813">Transport</keyword>
<name>MNHF1_STAA3</name>
<gene>
    <name type="primary">mnhF1</name>
    <name type="ordered locus">SAUSA300_0850</name>
</gene>
<accession>Q2FIC8</accession>
<reference key="1">
    <citation type="journal article" date="2006" name="Lancet">
        <title>Complete genome sequence of USA300, an epidemic clone of community-acquired meticillin-resistant Staphylococcus aureus.</title>
        <authorList>
            <person name="Diep B.A."/>
            <person name="Gill S.R."/>
            <person name="Chang R.F."/>
            <person name="Phan T.H."/>
            <person name="Chen J.H."/>
            <person name="Davidson M.G."/>
            <person name="Lin F."/>
            <person name="Lin J."/>
            <person name="Carleton H.A."/>
            <person name="Mongodin E.F."/>
            <person name="Sensabaugh G.F."/>
            <person name="Perdreau-Remington F."/>
        </authorList>
    </citation>
    <scope>NUCLEOTIDE SEQUENCE [LARGE SCALE GENOMIC DNA]</scope>
    <source>
        <strain>USA300</strain>
    </source>
</reference>
<proteinExistence type="inferred from homology"/>
<sequence>MNHNVIIVIALIIVVISMLAMLIRVVLGPSLADRVVALDAIGLQLMAVIALFSILLNIKYMIVVIMMIGILAFLGTAVFSKFMDKGKVIEHDQNHTD</sequence>
<dbReference type="EMBL" id="CP000255">
    <property type="protein sequence ID" value="ABD22400.1"/>
    <property type="molecule type" value="Genomic_DNA"/>
</dbReference>
<dbReference type="RefSeq" id="WP_001016306.1">
    <property type="nucleotide sequence ID" value="NZ_CP027476.1"/>
</dbReference>
<dbReference type="SMR" id="Q2FIC8"/>
<dbReference type="KEGG" id="saa:SAUSA300_0850"/>
<dbReference type="HOGENOM" id="CLU_125825_1_3_9"/>
<dbReference type="OMA" id="MRGEIIE"/>
<dbReference type="Proteomes" id="UP000001939">
    <property type="component" value="Chromosome"/>
</dbReference>
<dbReference type="GO" id="GO:0005886">
    <property type="term" value="C:plasma membrane"/>
    <property type="evidence" value="ECO:0007669"/>
    <property type="project" value="UniProtKB-SubCell"/>
</dbReference>
<dbReference type="GO" id="GO:0015385">
    <property type="term" value="F:sodium:proton antiporter activity"/>
    <property type="evidence" value="ECO:0007669"/>
    <property type="project" value="TreeGrafter"/>
</dbReference>
<dbReference type="InterPro" id="IPR007208">
    <property type="entry name" value="MrpF/PhaF-like"/>
</dbReference>
<dbReference type="NCBIfam" id="NF009248">
    <property type="entry name" value="PRK12600.1"/>
    <property type="match status" value="1"/>
</dbReference>
<dbReference type="PANTHER" id="PTHR34702">
    <property type="entry name" value="NA(+)/H(+) ANTIPORTER SUBUNIT F1"/>
    <property type="match status" value="1"/>
</dbReference>
<dbReference type="PANTHER" id="PTHR34702:SF1">
    <property type="entry name" value="NA(+)_H(+) ANTIPORTER SUBUNIT F"/>
    <property type="match status" value="1"/>
</dbReference>
<dbReference type="Pfam" id="PF04066">
    <property type="entry name" value="MrpF_PhaF"/>
    <property type="match status" value="1"/>
</dbReference>
<dbReference type="PIRSF" id="PIRSF028784">
    <property type="entry name" value="MrpF"/>
    <property type="match status" value="1"/>
</dbReference>
<evidence type="ECO:0000250" key="1"/>
<evidence type="ECO:0000255" key="2"/>
<evidence type="ECO:0000305" key="3"/>